<feature type="chain" id="PRO_0000198571" description="Ribonuclease P protein component">
    <location>
        <begin position="1"/>
        <end position="119"/>
    </location>
</feature>
<accession>Q8Z9U4</accession>
<accession>Q0W9T6</accession>
<evidence type="ECO:0000255" key="1">
    <source>
        <dbReference type="HAMAP-Rule" id="MF_00227"/>
    </source>
</evidence>
<keyword id="KW-0255">Endonuclease</keyword>
<keyword id="KW-0378">Hydrolase</keyword>
<keyword id="KW-0540">Nuclease</keyword>
<keyword id="KW-1185">Reference proteome</keyword>
<keyword id="KW-0694">RNA-binding</keyword>
<keyword id="KW-0819">tRNA processing</keyword>
<comment type="function">
    <text evidence="1">RNaseP catalyzes the removal of the 5'-leader sequence from pre-tRNA to produce the mature 5'-terminus. It can also cleave other RNA substrates such as 4.5S RNA. The protein component plays an auxiliary but essential role in vivo by binding to the 5'-leader sequence and broadening the substrate specificity of the ribozyme.</text>
</comment>
<comment type="catalytic activity">
    <reaction evidence="1">
        <text>Endonucleolytic cleavage of RNA, removing 5'-extranucleotides from tRNA precursor.</text>
        <dbReference type="EC" id="3.1.26.5"/>
    </reaction>
</comment>
<comment type="subunit">
    <text evidence="1">Consists of a catalytic RNA component (M1 or rnpB) and a protein subunit.</text>
</comment>
<comment type="similarity">
    <text evidence="1">Belongs to the RnpA family.</text>
</comment>
<proteinExistence type="inferred from homology"/>
<sequence length="119" mass="13800">MVKLAFPRELRLLTPSHFTFVFQQPQRAGTPQITILGRLNELGHPRIGLTVAKKHVKRAHERNRIKRLTRESFRLHQHALPSMDFVVLVKKGVADLDNRALTEALEKLWRRHCRQAPAS</sequence>
<reference key="1">
    <citation type="journal article" date="2001" name="Nature">
        <title>Genome sequence of Yersinia pestis, the causative agent of plague.</title>
        <authorList>
            <person name="Parkhill J."/>
            <person name="Wren B.W."/>
            <person name="Thomson N.R."/>
            <person name="Titball R.W."/>
            <person name="Holden M.T.G."/>
            <person name="Prentice M.B."/>
            <person name="Sebaihia M."/>
            <person name="James K.D."/>
            <person name="Churcher C.M."/>
            <person name="Mungall K.L."/>
            <person name="Baker S."/>
            <person name="Basham D."/>
            <person name="Bentley S.D."/>
            <person name="Brooks K."/>
            <person name="Cerdeno-Tarraga A.-M."/>
            <person name="Chillingworth T."/>
            <person name="Cronin A."/>
            <person name="Davies R.M."/>
            <person name="Davis P."/>
            <person name="Dougan G."/>
            <person name="Feltwell T."/>
            <person name="Hamlin N."/>
            <person name="Holroyd S."/>
            <person name="Jagels K."/>
            <person name="Karlyshev A.V."/>
            <person name="Leather S."/>
            <person name="Moule S."/>
            <person name="Oyston P.C.F."/>
            <person name="Quail M.A."/>
            <person name="Rutherford K.M."/>
            <person name="Simmonds M."/>
            <person name="Skelton J."/>
            <person name="Stevens K."/>
            <person name="Whitehead S."/>
            <person name="Barrell B.G."/>
        </authorList>
    </citation>
    <scope>NUCLEOTIDE SEQUENCE [LARGE SCALE GENOMIC DNA]</scope>
    <source>
        <strain>CO-92 / Biovar Orientalis</strain>
    </source>
</reference>
<reference key="2">
    <citation type="journal article" date="2002" name="J. Bacteriol.">
        <title>Genome sequence of Yersinia pestis KIM.</title>
        <authorList>
            <person name="Deng W."/>
            <person name="Burland V."/>
            <person name="Plunkett G. III"/>
            <person name="Boutin A."/>
            <person name="Mayhew G.F."/>
            <person name="Liss P."/>
            <person name="Perna N.T."/>
            <person name="Rose D.J."/>
            <person name="Mau B."/>
            <person name="Zhou S."/>
            <person name="Schwartz D.C."/>
            <person name="Fetherston J.D."/>
            <person name="Lindler L.E."/>
            <person name="Brubaker R.R."/>
            <person name="Plano G.V."/>
            <person name="Straley S.C."/>
            <person name="McDonough K.A."/>
            <person name="Nilles M.L."/>
            <person name="Matson J.S."/>
            <person name="Blattner F.R."/>
            <person name="Perry R.D."/>
        </authorList>
    </citation>
    <scope>NUCLEOTIDE SEQUENCE [LARGE SCALE GENOMIC DNA]</scope>
    <source>
        <strain>KIM10+ / Biovar Mediaevalis</strain>
    </source>
</reference>
<reference key="3">
    <citation type="journal article" date="2004" name="DNA Res.">
        <title>Complete genome sequence of Yersinia pestis strain 91001, an isolate avirulent to humans.</title>
        <authorList>
            <person name="Song Y."/>
            <person name="Tong Z."/>
            <person name="Wang J."/>
            <person name="Wang L."/>
            <person name="Guo Z."/>
            <person name="Han Y."/>
            <person name="Zhang J."/>
            <person name="Pei D."/>
            <person name="Zhou D."/>
            <person name="Qin H."/>
            <person name="Pang X."/>
            <person name="Han Y."/>
            <person name="Zhai J."/>
            <person name="Li M."/>
            <person name="Cui B."/>
            <person name="Qi Z."/>
            <person name="Jin L."/>
            <person name="Dai R."/>
            <person name="Chen F."/>
            <person name="Li S."/>
            <person name="Ye C."/>
            <person name="Du Z."/>
            <person name="Lin W."/>
            <person name="Wang J."/>
            <person name="Yu J."/>
            <person name="Yang H."/>
            <person name="Wang J."/>
            <person name="Huang P."/>
            <person name="Yang R."/>
        </authorList>
    </citation>
    <scope>NUCLEOTIDE SEQUENCE [LARGE SCALE GENOMIC DNA]</scope>
    <source>
        <strain>91001 / Biovar Mediaevalis</strain>
    </source>
</reference>
<organism>
    <name type="scientific">Yersinia pestis</name>
    <dbReference type="NCBI Taxonomy" id="632"/>
    <lineage>
        <taxon>Bacteria</taxon>
        <taxon>Pseudomonadati</taxon>
        <taxon>Pseudomonadota</taxon>
        <taxon>Gammaproteobacteria</taxon>
        <taxon>Enterobacterales</taxon>
        <taxon>Yersiniaceae</taxon>
        <taxon>Yersinia</taxon>
    </lineage>
</organism>
<gene>
    <name evidence="1" type="primary">rnpA</name>
    <name type="ordered locus">YPO4101</name>
    <name type="ordered locus">y4115</name>
    <name type="ordered locus">YP_4008</name>
</gene>
<protein>
    <recommendedName>
        <fullName evidence="1">Ribonuclease P protein component</fullName>
        <shortName evidence="1">RNase P protein</shortName>
        <shortName evidence="1">RNaseP protein</shortName>
        <ecNumber evidence="1">3.1.26.5</ecNumber>
    </recommendedName>
    <alternativeName>
        <fullName evidence="1">Protein C5</fullName>
    </alternativeName>
</protein>
<name>RNPA_YERPE</name>
<dbReference type="EC" id="3.1.26.5" evidence="1"/>
<dbReference type="EMBL" id="AL590842">
    <property type="protein sequence ID" value="CAL22669.1"/>
    <property type="molecule type" value="Genomic_DNA"/>
</dbReference>
<dbReference type="EMBL" id="AE009952">
    <property type="protein sequence ID" value="AAM87657.1"/>
    <property type="molecule type" value="Genomic_DNA"/>
</dbReference>
<dbReference type="EMBL" id="AE017042">
    <property type="protein sequence ID" value="AAS64147.1"/>
    <property type="molecule type" value="Genomic_DNA"/>
</dbReference>
<dbReference type="PIR" id="AI0497">
    <property type="entry name" value="AI0497"/>
</dbReference>
<dbReference type="RefSeq" id="WP_002228153.1">
    <property type="nucleotide sequence ID" value="NZ_WUCM01000028.1"/>
</dbReference>
<dbReference type="RefSeq" id="YP_002348952.1">
    <property type="nucleotide sequence ID" value="NC_003143.1"/>
</dbReference>
<dbReference type="SMR" id="Q8Z9U4"/>
<dbReference type="STRING" id="214092.YPO4101"/>
<dbReference type="PaxDb" id="214092-YPO4101"/>
<dbReference type="DNASU" id="1149062"/>
<dbReference type="EnsemblBacteria" id="AAS64147">
    <property type="protein sequence ID" value="AAS64147"/>
    <property type="gene ID" value="YP_4008"/>
</dbReference>
<dbReference type="GeneID" id="57974623"/>
<dbReference type="KEGG" id="ype:YPO4101"/>
<dbReference type="KEGG" id="ypk:y4115"/>
<dbReference type="KEGG" id="ypm:YP_4008"/>
<dbReference type="PATRIC" id="fig|214092.21.peg.4642"/>
<dbReference type="eggNOG" id="COG0594">
    <property type="taxonomic scope" value="Bacteria"/>
</dbReference>
<dbReference type="HOGENOM" id="CLU_117179_11_0_6"/>
<dbReference type="OMA" id="LHQHELP"/>
<dbReference type="OrthoDB" id="9796422at2"/>
<dbReference type="Proteomes" id="UP000000815">
    <property type="component" value="Chromosome"/>
</dbReference>
<dbReference type="Proteomes" id="UP000001019">
    <property type="component" value="Chromosome"/>
</dbReference>
<dbReference type="Proteomes" id="UP000002490">
    <property type="component" value="Chromosome"/>
</dbReference>
<dbReference type="GO" id="GO:0030677">
    <property type="term" value="C:ribonuclease P complex"/>
    <property type="evidence" value="ECO:0000318"/>
    <property type="project" value="GO_Central"/>
</dbReference>
<dbReference type="GO" id="GO:0042781">
    <property type="term" value="F:3'-tRNA processing endoribonuclease activity"/>
    <property type="evidence" value="ECO:0000318"/>
    <property type="project" value="GO_Central"/>
</dbReference>
<dbReference type="GO" id="GO:0004526">
    <property type="term" value="F:ribonuclease P activity"/>
    <property type="evidence" value="ECO:0000318"/>
    <property type="project" value="GO_Central"/>
</dbReference>
<dbReference type="GO" id="GO:0000049">
    <property type="term" value="F:tRNA binding"/>
    <property type="evidence" value="ECO:0007669"/>
    <property type="project" value="UniProtKB-UniRule"/>
</dbReference>
<dbReference type="GO" id="GO:0042780">
    <property type="term" value="P:tRNA 3'-end processing"/>
    <property type="evidence" value="ECO:0000318"/>
    <property type="project" value="GO_Central"/>
</dbReference>
<dbReference type="GO" id="GO:0001682">
    <property type="term" value="P:tRNA 5'-leader removal"/>
    <property type="evidence" value="ECO:0007669"/>
    <property type="project" value="UniProtKB-UniRule"/>
</dbReference>
<dbReference type="FunFam" id="3.30.230.10:FF:000016">
    <property type="entry name" value="Ribonuclease P protein component"/>
    <property type="match status" value="1"/>
</dbReference>
<dbReference type="Gene3D" id="3.30.230.10">
    <property type="match status" value="1"/>
</dbReference>
<dbReference type="HAMAP" id="MF_00227">
    <property type="entry name" value="RNase_P"/>
    <property type="match status" value="1"/>
</dbReference>
<dbReference type="InterPro" id="IPR020568">
    <property type="entry name" value="Ribosomal_Su5_D2-typ_SF"/>
</dbReference>
<dbReference type="InterPro" id="IPR014721">
    <property type="entry name" value="Ribsml_uS5_D2-typ_fold_subgr"/>
</dbReference>
<dbReference type="InterPro" id="IPR000100">
    <property type="entry name" value="RNase_P"/>
</dbReference>
<dbReference type="InterPro" id="IPR020539">
    <property type="entry name" value="RNase_P_CS"/>
</dbReference>
<dbReference type="NCBIfam" id="TIGR00188">
    <property type="entry name" value="rnpA"/>
    <property type="match status" value="1"/>
</dbReference>
<dbReference type="PANTHER" id="PTHR33992">
    <property type="entry name" value="RIBONUCLEASE P PROTEIN COMPONENT"/>
    <property type="match status" value="1"/>
</dbReference>
<dbReference type="PANTHER" id="PTHR33992:SF1">
    <property type="entry name" value="RIBONUCLEASE P PROTEIN COMPONENT"/>
    <property type="match status" value="1"/>
</dbReference>
<dbReference type="Pfam" id="PF00825">
    <property type="entry name" value="Ribonuclease_P"/>
    <property type="match status" value="1"/>
</dbReference>
<dbReference type="SUPFAM" id="SSF54211">
    <property type="entry name" value="Ribosomal protein S5 domain 2-like"/>
    <property type="match status" value="1"/>
</dbReference>
<dbReference type="PROSITE" id="PS00648">
    <property type="entry name" value="RIBONUCLEASE_P"/>
    <property type="match status" value="1"/>
</dbReference>